<protein>
    <recommendedName>
        <fullName>Complement component C8 beta chain</fullName>
    </recommendedName>
    <alternativeName>
        <fullName>Complement component 8 subunit beta</fullName>
    </alternativeName>
</protein>
<sequence length="590" mass="66858">MKKSWTWTWRVPAELLLLCAALGCLCVPGSRSERPRSLEPTVVNRSLAKSRHSRSVDATPMPIDCELSSWSSWTMCDPCQKKRYRHAYLLRPSQFNGEPCNFSDKEVEDCATSRPCRSQVRCEGFVCAQTGRCVNRRLLCNGDNDCGDQSDEANCRKIYKKCHHEMEQYWAIGSLASGINLFTNSLEGPVLDHRYYAGGCNPHYILDMRFRKPYNVESYTPQTQGKYKFALAEYESYSDFERNVMEKTYSKSTFNLGFKIPSIFEFGINTESDQLMNYISRTKRFSHTKSKFLHARSALEVAHYKLKPRNLMLHYDFLQRVQRVPLEYSYGEYRDLFRDFGHHFITEAVLGGIYEYTLIMNKEAMERADYSLNDVQACAKNDFKLGAAIEEVYVSLGVSTSKCRGILNEIKDRNKRDTMVQDLVVLVRGGASEHITALAYSDLPTADLMQEWGDAVQYNPAIIKIKVEPLYELVTATDVAYSSTVKQNMRQALEEFQGEVSPCRCAPCQGNGVPVQKGSRCDCICPVGFQGSACEITSRKNVPIDGRWSCWSRWSSCSGGQKTRRRQCNNPAPQDGGSPCSGPASETLAC</sequence>
<reference key="1">
    <citation type="journal article" date="1994" name="J. Immunol.">
        <title>Characterization of rabbit complement component C8. Functional evidence for the species-selective recognition of C8 alpha by homologous restriction factor (CD59).</title>
        <authorList>
            <person name="White R.V."/>
            <person name="Kaufman K.M."/>
            <person name="Letson C.S."/>
            <person name="Platteborze P.L."/>
            <person name="Sodetz J.M."/>
        </authorList>
    </citation>
    <scope>NUCLEOTIDE SEQUENCE [MRNA]</scope>
    <scope>FUNCTION</scope>
    <scope>SUBCELLULAR LOCATION</scope>
    <source>
        <strain>New Zealand white</strain>
        <tissue>Liver</tissue>
    </source>
</reference>
<keyword id="KW-0106">Calcium</keyword>
<keyword id="KW-0179">Complement alternate pathway</keyword>
<keyword id="KW-0180">Complement pathway</keyword>
<keyword id="KW-0204">Cytolysis</keyword>
<keyword id="KW-1015">Disulfide bond</keyword>
<keyword id="KW-0245">EGF-like domain</keyword>
<keyword id="KW-0325">Glycoprotein</keyword>
<keyword id="KW-0391">Immunity</keyword>
<keyword id="KW-0399">Innate immunity</keyword>
<keyword id="KW-0472">Membrane</keyword>
<keyword id="KW-0473">Membrane attack complex</keyword>
<keyword id="KW-0479">Metal-binding</keyword>
<keyword id="KW-0597">Phosphoprotein</keyword>
<keyword id="KW-1185">Reference proteome</keyword>
<keyword id="KW-0677">Repeat</keyword>
<keyword id="KW-0964">Secreted</keyword>
<keyword id="KW-0732">Signal</keyword>
<keyword id="KW-1052">Target cell membrane</keyword>
<keyword id="KW-1053">Target membrane</keyword>
<keyword id="KW-0812">Transmembrane</keyword>
<keyword id="KW-1134">Transmembrane beta strand</keyword>
<organism>
    <name type="scientific">Oryctolagus cuniculus</name>
    <name type="common">Rabbit</name>
    <dbReference type="NCBI Taxonomy" id="9986"/>
    <lineage>
        <taxon>Eukaryota</taxon>
        <taxon>Metazoa</taxon>
        <taxon>Chordata</taxon>
        <taxon>Craniata</taxon>
        <taxon>Vertebrata</taxon>
        <taxon>Euteleostomi</taxon>
        <taxon>Mammalia</taxon>
        <taxon>Eutheria</taxon>
        <taxon>Euarchontoglires</taxon>
        <taxon>Glires</taxon>
        <taxon>Lagomorpha</taxon>
        <taxon>Leporidae</taxon>
        <taxon>Oryctolagus</taxon>
    </lineage>
</organism>
<name>CO8B_RABIT</name>
<evidence type="ECO:0000250" key="1">
    <source>
        <dbReference type="UniProtKB" id="P07358"/>
    </source>
</evidence>
<evidence type="ECO:0000255" key="2"/>
<evidence type="ECO:0000255" key="3">
    <source>
        <dbReference type="PROSITE-ProRule" id="PRU00124"/>
    </source>
</evidence>
<evidence type="ECO:0000255" key="4">
    <source>
        <dbReference type="PROSITE-ProRule" id="PRU00210"/>
    </source>
</evidence>
<evidence type="ECO:0000255" key="5">
    <source>
        <dbReference type="PROSITE-ProRule" id="PRU00745"/>
    </source>
</evidence>
<evidence type="ECO:0000256" key="6">
    <source>
        <dbReference type="SAM" id="MobiDB-lite"/>
    </source>
</evidence>
<evidence type="ECO:0000269" key="7">
    <source>
    </source>
</evidence>
<evidence type="ECO:0000305" key="8"/>
<dbReference type="EMBL" id="L26980">
    <property type="protein sequence ID" value="AAA31192.1"/>
    <property type="molecule type" value="mRNA"/>
</dbReference>
<dbReference type="PIR" id="I46687">
    <property type="entry name" value="I46687"/>
</dbReference>
<dbReference type="RefSeq" id="NP_001076137.1">
    <property type="nucleotide sequence ID" value="NM_001082668.1"/>
</dbReference>
<dbReference type="SMR" id="P98137"/>
<dbReference type="FunCoup" id="P98137">
    <property type="interactions" value="22"/>
</dbReference>
<dbReference type="STRING" id="9986.ENSOCUP00000042473"/>
<dbReference type="GlyCosmos" id="P98137">
    <property type="glycosylation" value="6 sites, No reported glycans"/>
</dbReference>
<dbReference type="PaxDb" id="9986-ENSOCUP00000025903"/>
<dbReference type="GeneID" id="100009385"/>
<dbReference type="KEGG" id="ocu:100009385"/>
<dbReference type="CTD" id="732"/>
<dbReference type="eggNOG" id="KOG3535">
    <property type="taxonomic scope" value="Eukaryota"/>
</dbReference>
<dbReference type="InParanoid" id="P98137"/>
<dbReference type="OrthoDB" id="6150863at2759"/>
<dbReference type="Proteomes" id="UP000001811">
    <property type="component" value="Unplaced"/>
</dbReference>
<dbReference type="GO" id="GO:0005576">
    <property type="term" value="C:extracellular region"/>
    <property type="evidence" value="ECO:0007669"/>
    <property type="project" value="UniProtKB-SubCell"/>
</dbReference>
<dbReference type="GO" id="GO:0005579">
    <property type="term" value="C:membrane attack complex"/>
    <property type="evidence" value="ECO:0007669"/>
    <property type="project" value="UniProtKB-KW"/>
</dbReference>
<dbReference type="GO" id="GO:0006957">
    <property type="term" value="P:complement activation, alternative pathway"/>
    <property type="evidence" value="ECO:0007669"/>
    <property type="project" value="UniProtKB-KW"/>
</dbReference>
<dbReference type="GO" id="GO:0006958">
    <property type="term" value="P:complement activation, classical pathway"/>
    <property type="evidence" value="ECO:0007669"/>
    <property type="project" value="UniProtKB-KW"/>
</dbReference>
<dbReference type="GO" id="GO:0031640">
    <property type="term" value="P:killing of cells of another organism"/>
    <property type="evidence" value="ECO:0007669"/>
    <property type="project" value="UniProtKB-KW"/>
</dbReference>
<dbReference type="CDD" id="cd00112">
    <property type="entry name" value="LDLa"/>
    <property type="match status" value="1"/>
</dbReference>
<dbReference type="FunFam" id="2.20.100.10:FF:000082">
    <property type="entry name" value="Complement component C8 beta chain"/>
    <property type="match status" value="1"/>
</dbReference>
<dbReference type="FunFam" id="4.10.400.10:FF:000069">
    <property type="entry name" value="complement component C8 beta chain"/>
    <property type="match status" value="1"/>
</dbReference>
<dbReference type="Gene3D" id="2.10.25.10">
    <property type="entry name" value="Laminin"/>
    <property type="match status" value="1"/>
</dbReference>
<dbReference type="Gene3D" id="4.10.400.10">
    <property type="entry name" value="Low-density Lipoprotein Receptor"/>
    <property type="match status" value="1"/>
</dbReference>
<dbReference type="Gene3D" id="2.20.100.10">
    <property type="entry name" value="Thrombospondin type-1 (TSP1) repeat"/>
    <property type="match status" value="2"/>
</dbReference>
<dbReference type="InterPro" id="IPR048831">
    <property type="entry name" value="C8A_B_C6_EGF-like"/>
</dbReference>
<dbReference type="InterPro" id="IPR000742">
    <property type="entry name" value="EGF-like_dom"/>
</dbReference>
<dbReference type="InterPro" id="IPR036055">
    <property type="entry name" value="LDL_receptor-like_sf"/>
</dbReference>
<dbReference type="InterPro" id="IPR023415">
    <property type="entry name" value="LDLR_class-A_CS"/>
</dbReference>
<dbReference type="InterPro" id="IPR002172">
    <property type="entry name" value="LDrepeatLR_classA_rpt"/>
</dbReference>
<dbReference type="InterPro" id="IPR001862">
    <property type="entry name" value="MAC_perforin"/>
</dbReference>
<dbReference type="InterPro" id="IPR020864">
    <property type="entry name" value="MACPF"/>
</dbReference>
<dbReference type="InterPro" id="IPR000884">
    <property type="entry name" value="TSP1_rpt"/>
</dbReference>
<dbReference type="InterPro" id="IPR036383">
    <property type="entry name" value="TSP1_rpt_sf"/>
</dbReference>
<dbReference type="PANTHER" id="PTHR45742">
    <property type="entry name" value="COMPLEMENT COMPONENT C6"/>
    <property type="match status" value="1"/>
</dbReference>
<dbReference type="PANTHER" id="PTHR45742:SF5">
    <property type="entry name" value="COMPLEMENT COMPONENT C8 BETA CHAIN"/>
    <property type="match status" value="1"/>
</dbReference>
<dbReference type="Pfam" id="PF21195">
    <property type="entry name" value="EGF_C8A_B_C6"/>
    <property type="match status" value="1"/>
</dbReference>
<dbReference type="Pfam" id="PF00057">
    <property type="entry name" value="Ldl_recept_a"/>
    <property type="match status" value="1"/>
</dbReference>
<dbReference type="Pfam" id="PF01823">
    <property type="entry name" value="MACPF"/>
    <property type="match status" value="1"/>
</dbReference>
<dbReference type="Pfam" id="PF00090">
    <property type="entry name" value="TSP_1"/>
    <property type="match status" value="2"/>
</dbReference>
<dbReference type="PRINTS" id="PR00764">
    <property type="entry name" value="COMPLEMENTC9"/>
</dbReference>
<dbReference type="PRINTS" id="PR01705">
    <property type="entry name" value="TSP1REPEAT"/>
</dbReference>
<dbReference type="SMART" id="SM00192">
    <property type="entry name" value="LDLa"/>
    <property type="match status" value="1"/>
</dbReference>
<dbReference type="SMART" id="SM00457">
    <property type="entry name" value="MACPF"/>
    <property type="match status" value="1"/>
</dbReference>
<dbReference type="SMART" id="SM00209">
    <property type="entry name" value="TSP1"/>
    <property type="match status" value="2"/>
</dbReference>
<dbReference type="SUPFAM" id="SSF57424">
    <property type="entry name" value="LDL receptor-like module"/>
    <property type="match status" value="1"/>
</dbReference>
<dbReference type="SUPFAM" id="SSF82895">
    <property type="entry name" value="TSP-1 type 1 repeat"/>
    <property type="match status" value="2"/>
</dbReference>
<dbReference type="PROSITE" id="PS00022">
    <property type="entry name" value="EGF_1"/>
    <property type="match status" value="1"/>
</dbReference>
<dbReference type="PROSITE" id="PS01186">
    <property type="entry name" value="EGF_2"/>
    <property type="match status" value="1"/>
</dbReference>
<dbReference type="PROSITE" id="PS01209">
    <property type="entry name" value="LDLRA_1"/>
    <property type="match status" value="1"/>
</dbReference>
<dbReference type="PROSITE" id="PS50068">
    <property type="entry name" value="LDLRA_2"/>
    <property type="match status" value="1"/>
</dbReference>
<dbReference type="PROSITE" id="PS51412">
    <property type="entry name" value="MACPF_2"/>
    <property type="match status" value="1"/>
</dbReference>
<dbReference type="PROSITE" id="PS50092">
    <property type="entry name" value="TSP1"/>
    <property type="match status" value="2"/>
</dbReference>
<feature type="signal peptide" evidence="2">
    <location>
        <begin position="1"/>
        <end position="32"/>
    </location>
</feature>
<feature type="propeptide" id="PRO_0000023595" evidence="2">
    <location>
        <begin position="33"/>
        <end position="54"/>
    </location>
</feature>
<feature type="chain" id="PRO_0000023596" description="Complement component C8 beta chain">
    <location>
        <begin position="55"/>
        <end position="590"/>
    </location>
</feature>
<feature type="transmembrane region" description="Beta stranded" evidence="1">
    <location>
        <begin position="252"/>
        <end position="259"/>
    </location>
</feature>
<feature type="transmembrane region" description="Beta stranded" evidence="1">
    <location>
        <begin position="262"/>
        <end position="269"/>
    </location>
</feature>
<feature type="transmembrane region" description="Beta stranded" evidence="1">
    <location>
        <begin position="379"/>
        <end position="386"/>
    </location>
</feature>
<feature type="transmembrane region" description="Beta stranded" evidence="1">
    <location>
        <begin position="392"/>
        <end position="399"/>
    </location>
</feature>
<feature type="domain" description="TSP type-1 1" evidence="4">
    <location>
        <begin position="64"/>
        <end position="117"/>
    </location>
</feature>
<feature type="domain" description="LDL-receptor class A" evidence="3">
    <location>
        <begin position="120"/>
        <end position="157"/>
    </location>
</feature>
<feature type="domain" description="MACPF" evidence="5">
    <location>
        <begin position="158"/>
        <end position="504"/>
    </location>
</feature>
<feature type="domain" description="EGF-like">
    <location>
        <begin position="505"/>
        <end position="535"/>
    </location>
</feature>
<feature type="domain" description="TSP type-1 2" evidence="4">
    <location>
        <begin position="545"/>
        <end position="588"/>
    </location>
</feature>
<feature type="region of interest" description="Disordered" evidence="6">
    <location>
        <begin position="557"/>
        <end position="590"/>
    </location>
</feature>
<feature type="binding site" evidence="1">
    <location>
        <position position="138"/>
    </location>
    <ligand>
        <name>Ca(2+)</name>
        <dbReference type="ChEBI" id="CHEBI:29108"/>
    </ligand>
</feature>
<feature type="binding site" evidence="1">
    <location>
        <position position="141"/>
    </location>
    <ligand>
        <name>Ca(2+)</name>
        <dbReference type="ChEBI" id="CHEBI:29108"/>
    </ligand>
</feature>
<feature type="binding site" evidence="1">
    <location>
        <position position="143"/>
    </location>
    <ligand>
        <name>Ca(2+)</name>
        <dbReference type="ChEBI" id="CHEBI:29108"/>
    </ligand>
</feature>
<feature type="binding site" evidence="1">
    <location>
        <position position="145"/>
    </location>
    <ligand>
        <name>Ca(2+)</name>
        <dbReference type="ChEBI" id="CHEBI:29108"/>
    </ligand>
</feature>
<feature type="binding site" evidence="1">
    <location>
        <position position="151"/>
    </location>
    <ligand>
        <name>Ca(2+)</name>
        <dbReference type="ChEBI" id="CHEBI:29108"/>
    </ligand>
</feature>
<feature type="binding site" evidence="1">
    <location>
        <position position="152"/>
    </location>
    <ligand>
        <name>Ca(2+)</name>
        <dbReference type="ChEBI" id="CHEBI:29108"/>
    </ligand>
</feature>
<feature type="modified residue" description="Phosphothreonine" evidence="1">
    <location>
        <position position="418"/>
    </location>
</feature>
<feature type="glycosylation site" description="N-linked (GlcNAc...) asparagine" evidence="2">
    <location>
        <position position="44"/>
    </location>
</feature>
<feature type="glycosylation site" description="C-linked (Man) tryptophan" evidence="1">
    <location>
        <position position="70"/>
    </location>
</feature>
<feature type="glycosylation site" description="C-linked (Man) tryptophan" evidence="1">
    <location>
        <position position="73"/>
    </location>
</feature>
<feature type="glycosylation site" description="N-linked (GlcNAc...) asparagine" evidence="2">
    <location>
        <position position="101"/>
    </location>
</feature>
<feature type="glycosylation site" description="C-linked (Man) tryptophan" evidence="1">
    <location>
        <position position="551"/>
    </location>
</feature>
<feature type="glycosylation site" description="C-linked (Man) tryptophan" evidence="1">
    <location>
        <position position="554"/>
    </location>
</feature>
<feature type="disulfide bond" evidence="1">
    <location>
        <begin position="65"/>
        <end position="100"/>
    </location>
</feature>
<feature type="disulfide bond" evidence="1">
    <location>
        <begin position="76"/>
        <end position="110"/>
    </location>
</feature>
<feature type="disulfide bond" evidence="1">
    <location>
        <begin position="79"/>
        <end position="116"/>
    </location>
</feature>
<feature type="disulfide bond" evidence="1">
    <location>
        <begin position="122"/>
        <end position="133"/>
    </location>
</feature>
<feature type="disulfide bond" evidence="1">
    <location>
        <begin position="127"/>
        <end position="146"/>
    </location>
</feature>
<feature type="disulfide bond" evidence="1">
    <location>
        <begin position="140"/>
        <end position="155"/>
    </location>
</feature>
<feature type="disulfide bond" evidence="1">
    <location>
        <begin position="162"/>
        <end position="200"/>
    </location>
</feature>
<feature type="disulfide bond" evidence="1">
    <location>
        <begin position="378"/>
        <end position="403"/>
    </location>
</feature>
<feature type="disulfide bond" evidence="1">
    <location>
        <begin position="503"/>
        <end position="550"/>
    </location>
</feature>
<feature type="disulfide bond" evidence="1">
    <location>
        <begin position="505"/>
        <end position="521"/>
    </location>
</feature>
<feature type="disulfide bond" evidence="1">
    <location>
        <begin position="508"/>
        <end position="523"/>
    </location>
</feature>
<feature type="disulfide bond" evidence="1">
    <location>
        <begin position="525"/>
        <end position="534"/>
    </location>
</feature>
<feature type="disulfide bond" evidence="1">
    <location>
        <begin position="557"/>
        <end position="590"/>
    </location>
</feature>
<accession>P98137</accession>
<comment type="function">
    <text evidence="1 7">Component of the membrane attack complex (MAC), a multiprotein complex activated by the complement cascade, which inserts into a target cell membrane and forms a pore, leading to target cell membrane rupture and cell lysis (PubMed:7510745). The MAC is initiated by proteolytic cleavage of C5 into complement C5b in response to the classical, alternative, lectin and GZMK complement pathways. The complement pathways consist in a cascade of proteins that leads to phagocytosis and breakdown of pathogens and signaling that strengthens the adaptive immune system. C8B, together with C8A and C8G, inserts into the target membrane, but does not form pores by itself. During MAC assembly, associates with C5b, C6 and C7 to form the C5b8 intermediate complex that inserts into the target membrane and traverses the bilayer increasing membrane rigidity (By similarity).</text>
</comment>
<comment type="activity regulation">
    <text evidence="1">Membrane attack complex (MAC) assembly is inhibited by CD59, thereby protecting self-cells from damage during complement activation. CD59 acts by binding to the beta-haipins of C8 (C8A and C8B), forming an intermolecular beta-sheet that prevents incorporation of the multiple copies of C9 required for complete formation of the osmolytic pore. MAC assembly is also inhibited by clusterin (CLU) chaperones that inhibit polymerization of C9.</text>
</comment>
<comment type="subunit">
    <text evidence="1">Heterotrimer of 3 chains: alpha (C8A), beta (C8B) and gamma (C8G); the alpha and gamma chains are disulfide bonded. Component of the membrane attack complex (MAC), composed of complement C5b, C6, C7, C8A, C8B, C8G and multiple copies of the pore-forming subunit C9.</text>
</comment>
<comment type="subcellular location">
    <subcellularLocation>
        <location evidence="7">Secreted</location>
    </subcellularLocation>
    <subcellularLocation>
        <location evidence="1">Target cell membrane</location>
        <topology evidence="1">Multi-pass membrane protein</topology>
    </subcellularLocation>
    <text evidence="1">Secreted as soluble protein. Inserts into the cell membrane of target cells.</text>
</comment>
<comment type="PTM">
    <text evidence="1">N-glycosylated; contains one or two bound glycans. Not O-glycosylated.</text>
</comment>
<comment type="similarity">
    <text evidence="8">Belongs to the complement C6/C7/C8/C9 family.</text>
</comment>
<proteinExistence type="evidence at transcript level"/>
<gene>
    <name type="primary">C8B</name>
</gene>